<proteinExistence type="inferred from homology"/>
<sequence>MNAFTRAWYALERHYQDTRHVLLRDRFACEPDRFERMHERLDGMLFDYSKNRLGEDTLQLLCNLADAADLEGKMRALRTGAKVNGSEGRAALHTALRLPDGADAVYVDGRDVLPEIRRELNRALKFAHSLDDGSYQGITGKRITDFVHIGIGGSDLGPAMCVQALEPFRRHITVHFAANADPACLDAVLCRLNPETTVFCVASKSFKTPETLLNAQAVKAWYRGAGFSESETACHFCAVSADTAAAAAFGIAAERVFAMYDWVGGRYSVWSPVGLPVMVAVGGARFRELLAGAHAMDRHFFSTPTRHNIPVLMALIAVWYNNFQHADGQTAVPYSHNLRLLPAWLNQLDMESLGKSRASDGSPAVCKTGGIVFGGEGVNCQHAYFQLLHQGTRLIPCDFIVPMTAQGREDGRSRFTVANAFAQAEALMKGKTLDEARAELADLPEAERERLAPHKEFPGNRPSNSILIDRLTPYNLGMLMAAYEHKTFVQGAIWNVNPFDQWGVEYGKQLAKTIIGELEGGTSVHDASTEGLMAFYRECRLKGGGAA</sequence>
<evidence type="ECO:0000255" key="1">
    <source>
        <dbReference type="HAMAP-Rule" id="MF_00473"/>
    </source>
</evidence>
<evidence type="ECO:0000305" key="2"/>
<gene>
    <name evidence="1" type="primary">pgi2</name>
    <name type="ordered locus">NMB0334</name>
</gene>
<dbReference type="EC" id="5.3.1.9" evidence="1"/>
<dbReference type="EMBL" id="AE002098">
    <property type="protein sequence ID" value="AAF40777.1"/>
    <property type="molecule type" value="Genomic_DNA"/>
</dbReference>
<dbReference type="PIR" id="A81211">
    <property type="entry name" value="A81211"/>
</dbReference>
<dbReference type="RefSeq" id="NP_273383.1">
    <property type="nucleotide sequence ID" value="NC_003112.2"/>
</dbReference>
<dbReference type="SMR" id="Q9K153"/>
<dbReference type="STRING" id="122586.NMB0334"/>
<dbReference type="PaxDb" id="122586-NMB0334"/>
<dbReference type="KEGG" id="nme:NMB0334"/>
<dbReference type="PATRIC" id="fig|122586.8.peg.422"/>
<dbReference type="HOGENOM" id="CLU_017947_3_1_4"/>
<dbReference type="InParanoid" id="Q9K153"/>
<dbReference type="OrthoDB" id="140919at2"/>
<dbReference type="UniPathway" id="UPA00109">
    <property type="reaction ID" value="UER00181"/>
</dbReference>
<dbReference type="UniPathway" id="UPA00138"/>
<dbReference type="Proteomes" id="UP000000425">
    <property type="component" value="Chromosome"/>
</dbReference>
<dbReference type="GO" id="GO:0005829">
    <property type="term" value="C:cytosol"/>
    <property type="evidence" value="ECO:0000318"/>
    <property type="project" value="GO_Central"/>
</dbReference>
<dbReference type="GO" id="GO:0097367">
    <property type="term" value="F:carbohydrate derivative binding"/>
    <property type="evidence" value="ECO:0007669"/>
    <property type="project" value="InterPro"/>
</dbReference>
<dbReference type="GO" id="GO:0004347">
    <property type="term" value="F:glucose-6-phosphate isomerase activity"/>
    <property type="evidence" value="ECO:0000318"/>
    <property type="project" value="GO_Central"/>
</dbReference>
<dbReference type="GO" id="GO:0048029">
    <property type="term" value="F:monosaccharide binding"/>
    <property type="evidence" value="ECO:0000318"/>
    <property type="project" value="GO_Central"/>
</dbReference>
<dbReference type="GO" id="GO:0006094">
    <property type="term" value="P:gluconeogenesis"/>
    <property type="evidence" value="ECO:0000318"/>
    <property type="project" value="GO_Central"/>
</dbReference>
<dbReference type="GO" id="GO:0051156">
    <property type="term" value="P:glucose 6-phosphate metabolic process"/>
    <property type="evidence" value="ECO:0000318"/>
    <property type="project" value="GO_Central"/>
</dbReference>
<dbReference type="GO" id="GO:0006096">
    <property type="term" value="P:glycolytic process"/>
    <property type="evidence" value="ECO:0000318"/>
    <property type="project" value="GO_Central"/>
</dbReference>
<dbReference type="CDD" id="cd05015">
    <property type="entry name" value="SIS_PGI_1"/>
    <property type="match status" value="1"/>
</dbReference>
<dbReference type="CDD" id="cd05016">
    <property type="entry name" value="SIS_PGI_2"/>
    <property type="match status" value="1"/>
</dbReference>
<dbReference type="FunFam" id="1.10.1390.10:FF:000001">
    <property type="entry name" value="Glucose-6-phosphate isomerase"/>
    <property type="match status" value="1"/>
</dbReference>
<dbReference type="Gene3D" id="1.10.1390.10">
    <property type="match status" value="1"/>
</dbReference>
<dbReference type="Gene3D" id="3.40.50.10490">
    <property type="entry name" value="Glucose-6-phosphate isomerase like protein, domain 1"/>
    <property type="match status" value="2"/>
</dbReference>
<dbReference type="HAMAP" id="MF_00473">
    <property type="entry name" value="G6P_isomerase"/>
    <property type="match status" value="1"/>
</dbReference>
<dbReference type="InterPro" id="IPR001672">
    <property type="entry name" value="G6P_Isomerase"/>
</dbReference>
<dbReference type="InterPro" id="IPR023096">
    <property type="entry name" value="G6P_Isomerase_C"/>
</dbReference>
<dbReference type="InterPro" id="IPR018189">
    <property type="entry name" value="Phosphoglucose_isomerase_CS"/>
</dbReference>
<dbReference type="InterPro" id="IPR046348">
    <property type="entry name" value="SIS_dom_sf"/>
</dbReference>
<dbReference type="InterPro" id="IPR035476">
    <property type="entry name" value="SIS_PGI_1"/>
</dbReference>
<dbReference type="InterPro" id="IPR035482">
    <property type="entry name" value="SIS_PGI_2"/>
</dbReference>
<dbReference type="NCBIfam" id="NF001211">
    <property type="entry name" value="PRK00179.1"/>
    <property type="match status" value="1"/>
</dbReference>
<dbReference type="PANTHER" id="PTHR11469">
    <property type="entry name" value="GLUCOSE-6-PHOSPHATE ISOMERASE"/>
    <property type="match status" value="1"/>
</dbReference>
<dbReference type="PANTHER" id="PTHR11469:SF1">
    <property type="entry name" value="GLUCOSE-6-PHOSPHATE ISOMERASE"/>
    <property type="match status" value="1"/>
</dbReference>
<dbReference type="Pfam" id="PF00342">
    <property type="entry name" value="PGI"/>
    <property type="match status" value="1"/>
</dbReference>
<dbReference type="PRINTS" id="PR00662">
    <property type="entry name" value="G6PISOMERASE"/>
</dbReference>
<dbReference type="SUPFAM" id="SSF53697">
    <property type="entry name" value="SIS domain"/>
    <property type="match status" value="1"/>
</dbReference>
<dbReference type="PROSITE" id="PS00765">
    <property type="entry name" value="P_GLUCOSE_ISOMERASE_1"/>
    <property type="match status" value="1"/>
</dbReference>
<dbReference type="PROSITE" id="PS00174">
    <property type="entry name" value="P_GLUCOSE_ISOMERASE_2"/>
    <property type="match status" value="1"/>
</dbReference>
<dbReference type="PROSITE" id="PS51463">
    <property type="entry name" value="P_GLUCOSE_ISOMERASE_3"/>
    <property type="match status" value="1"/>
</dbReference>
<accession>Q9K153</accession>
<feature type="chain" id="PRO_0000180694" description="Glucose-6-phosphate isomerase 2">
    <location>
        <begin position="1"/>
        <end position="547"/>
    </location>
</feature>
<feature type="active site" description="Proton donor" evidence="1">
    <location>
        <position position="351"/>
    </location>
</feature>
<feature type="active site" evidence="1">
    <location>
        <position position="382"/>
    </location>
</feature>
<feature type="active site" evidence="1">
    <location>
        <position position="508"/>
    </location>
</feature>
<keyword id="KW-0963">Cytoplasm</keyword>
<keyword id="KW-0312">Gluconeogenesis</keyword>
<keyword id="KW-0324">Glycolysis</keyword>
<keyword id="KW-0413">Isomerase</keyword>
<keyword id="KW-1185">Reference proteome</keyword>
<name>G6PI2_NEIMB</name>
<comment type="function">
    <text evidence="1">Catalyzes the reversible isomerization of glucose-6-phosphate to fructose-6-phosphate.</text>
</comment>
<comment type="catalytic activity">
    <reaction evidence="1">
        <text>alpha-D-glucose 6-phosphate = beta-D-fructose 6-phosphate</text>
        <dbReference type="Rhea" id="RHEA:11816"/>
        <dbReference type="ChEBI" id="CHEBI:57634"/>
        <dbReference type="ChEBI" id="CHEBI:58225"/>
        <dbReference type="EC" id="5.3.1.9"/>
    </reaction>
</comment>
<comment type="pathway">
    <text evidence="1">Carbohydrate biosynthesis; gluconeogenesis.</text>
</comment>
<comment type="pathway">
    <text evidence="1">Carbohydrate degradation; glycolysis; D-glyceraldehyde 3-phosphate and glycerone phosphate from D-glucose: step 2/4.</text>
</comment>
<comment type="subcellular location">
    <subcellularLocation>
        <location evidence="1">Cytoplasm</location>
    </subcellularLocation>
</comment>
<comment type="similarity">
    <text evidence="1 2">Belongs to the GPI family.</text>
</comment>
<reference key="1">
    <citation type="journal article" date="2000" name="Science">
        <title>Complete genome sequence of Neisseria meningitidis serogroup B strain MC58.</title>
        <authorList>
            <person name="Tettelin H."/>
            <person name="Saunders N.J."/>
            <person name="Heidelberg J.F."/>
            <person name="Jeffries A.C."/>
            <person name="Nelson K.E."/>
            <person name="Eisen J.A."/>
            <person name="Ketchum K.A."/>
            <person name="Hood D.W."/>
            <person name="Peden J.F."/>
            <person name="Dodson R.J."/>
            <person name="Nelson W.C."/>
            <person name="Gwinn M.L."/>
            <person name="DeBoy R.T."/>
            <person name="Peterson J.D."/>
            <person name="Hickey E.K."/>
            <person name="Haft D.H."/>
            <person name="Salzberg S.L."/>
            <person name="White O."/>
            <person name="Fleischmann R.D."/>
            <person name="Dougherty B.A."/>
            <person name="Mason T.M."/>
            <person name="Ciecko A."/>
            <person name="Parksey D.S."/>
            <person name="Blair E."/>
            <person name="Cittone H."/>
            <person name="Clark E.B."/>
            <person name="Cotton M.D."/>
            <person name="Utterback T.R."/>
            <person name="Khouri H.M."/>
            <person name="Qin H."/>
            <person name="Vamathevan J.J."/>
            <person name="Gill J."/>
            <person name="Scarlato V."/>
            <person name="Masignani V."/>
            <person name="Pizza M."/>
            <person name="Grandi G."/>
            <person name="Sun L."/>
            <person name="Smith H.O."/>
            <person name="Fraser C.M."/>
            <person name="Moxon E.R."/>
            <person name="Rappuoli R."/>
            <person name="Venter J.C."/>
        </authorList>
    </citation>
    <scope>NUCLEOTIDE SEQUENCE [LARGE SCALE GENOMIC DNA]</scope>
    <source>
        <strain>ATCC BAA-335 / MC58</strain>
    </source>
</reference>
<protein>
    <recommendedName>
        <fullName evidence="1">Glucose-6-phosphate isomerase 2</fullName>
        <shortName evidence="1">GPI 2</shortName>
        <ecNumber evidence="1">5.3.1.9</ecNumber>
    </recommendedName>
    <alternativeName>
        <fullName evidence="1">Phosphoglucose isomerase 2</fullName>
        <shortName evidence="1">PGI 2</shortName>
    </alternativeName>
    <alternativeName>
        <fullName evidence="1">Phosphohexose isomerase 2</fullName>
        <shortName evidence="1">PHI 2</shortName>
    </alternativeName>
</protein>
<organism>
    <name type="scientific">Neisseria meningitidis serogroup B (strain ATCC BAA-335 / MC58)</name>
    <dbReference type="NCBI Taxonomy" id="122586"/>
    <lineage>
        <taxon>Bacteria</taxon>
        <taxon>Pseudomonadati</taxon>
        <taxon>Pseudomonadota</taxon>
        <taxon>Betaproteobacteria</taxon>
        <taxon>Neisseriales</taxon>
        <taxon>Neisseriaceae</taxon>
        <taxon>Neisseria</taxon>
    </lineage>
</organism>